<comment type="function">
    <text evidence="1">Co-chaperone that regulates diverse cellular pathways, such as programmed cell death and stress responses.</text>
</comment>
<comment type="subunit">
    <text evidence="1">Binds to the ATPase domain of HSP70/HSC70 chaperones.</text>
</comment>
<comment type="alternative products">
    <event type="alternative splicing"/>
    <isoform>
        <id>Q0WPX7-1</id>
        <name>1</name>
        <sequence type="displayed"/>
    </isoform>
    <isoform>
        <id>Q0WPX7-2</id>
        <name>2</name>
        <sequence type="described" ref="VSP_042273"/>
    </isoform>
</comment>
<comment type="miscellaneous">
    <molecule>Isoform 2</molecule>
    <text evidence="6">May be due to a competing acceptor splice site.</text>
</comment>
<comment type="sequence caution" evidence="6">
    <conflict type="erroneous initiation">
        <sequence resource="EMBL-CDS" id="AAM62536"/>
    </conflict>
    <text>Truncated N-terminus.</text>
</comment>
<comment type="sequence caution" evidence="6">
    <conflict type="erroneous gene model prediction">
        <sequence resource="EMBL-CDS" id="BAB10172"/>
    </conflict>
</comment>
<organism>
    <name type="scientific">Arabidopsis thaliana</name>
    <name type="common">Mouse-ear cress</name>
    <dbReference type="NCBI Taxonomy" id="3702"/>
    <lineage>
        <taxon>Eukaryota</taxon>
        <taxon>Viridiplantae</taxon>
        <taxon>Streptophyta</taxon>
        <taxon>Embryophyta</taxon>
        <taxon>Tracheophyta</taxon>
        <taxon>Spermatophyta</taxon>
        <taxon>Magnoliopsida</taxon>
        <taxon>eudicotyledons</taxon>
        <taxon>Gunneridae</taxon>
        <taxon>Pentapetalae</taxon>
        <taxon>rosids</taxon>
        <taxon>malvids</taxon>
        <taxon>Brassicales</taxon>
        <taxon>Brassicaceae</taxon>
        <taxon>Camelineae</taxon>
        <taxon>Arabidopsis</taxon>
    </lineage>
</organism>
<keyword id="KW-0002">3D-structure</keyword>
<keyword id="KW-0025">Alternative splicing</keyword>
<keyword id="KW-0143">Chaperone</keyword>
<keyword id="KW-0597">Phosphoprotein</keyword>
<keyword id="KW-1185">Reference proteome</keyword>
<reference key="1">
    <citation type="journal article" date="1998" name="DNA Res.">
        <title>Structural analysis of Arabidopsis thaliana chromosome 5. VII. Sequence features of the regions of 1,013,767 bp covered by sixteen physically assigned P1 and TAC clones.</title>
        <authorList>
            <person name="Nakamura Y."/>
            <person name="Sato S."/>
            <person name="Asamizu E."/>
            <person name="Kaneko T."/>
            <person name="Kotani H."/>
            <person name="Miyajima N."/>
            <person name="Tabata S."/>
        </authorList>
    </citation>
    <scope>NUCLEOTIDE SEQUENCE [LARGE SCALE GENOMIC DNA]</scope>
    <source>
        <strain>cv. Columbia</strain>
    </source>
</reference>
<reference key="2">
    <citation type="journal article" date="2017" name="Plant J.">
        <title>Araport11: a complete reannotation of the Arabidopsis thaliana reference genome.</title>
        <authorList>
            <person name="Cheng C.Y."/>
            <person name="Krishnakumar V."/>
            <person name="Chan A.P."/>
            <person name="Thibaud-Nissen F."/>
            <person name="Schobel S."/>
            <person name="Town C.D."/>
        </authorList>
    </citation>
    <scope>GENOME REANNOTATION</scope>
    <source>
        <strain>cv. Columbia</strain>
    </source>
</reference>
<reference key="3">
    <citation type="submission" date="2006-07" db="EMBL/GenBank/DDBJ databases">
        <title>Large-scale analysis of RIKEN Arabidopsis full-length (RAFL) cDNAs.</title>
        <authorList>
            <person name="Totoki Y."/>
            <person name="Seki M."/>
            <person name="Ishida J."/>
            <person name="Nakajima M."/>
            <person name="Enju A."/>
            <person name="Kamiya A."/>
            <person name="Narusaka M."/>
            <person name="Shin-i T."/>
            <person name="Nakagawa M."/>
            <person name="Sakamoto N."/>
            <person name="Oishi K."/>
            <person name="Kohara Y."/>
            <person name="Kobayashi M."/>
            <person name="Toyoda A."/>
            <person name="Sakaki Y."/>
            <person name="Sakurai T."/>
            <person name="Iida K."/>
            <person name="Akiyama K."/>
            <person name="Satou M."/>
            <person name="Toyoda T."/>
            <person name="Konagaya A."/>
            <person name="Carninci P."/>
            <person name="Kawai J."/>
            <person name="Hayashizaki Y."/>
            <person name="Shinozaki K."/>
        </authorList>
    </citation>
    <scope>NUCLEOTIDE SEQUENCE [LARGE SCALE MRNA] (ISOFORM 1)</scope>
    <source>
        <strain>cv. Columbia</strain>
    </source>
</reference>
<reference key="4">
    <citation type="submission" date="2002-03" db="EMBL/GenBank/DDBJ databases">
        <title>Full-length cDNA from Arabidopsis thaliana.</title>
        <authorList>
            <person name="Brover V.V."/>
            <person name="Troukhan M.E."/>
            <person name="Alexandrov N.A."/>
            <person name="Lu Y.-P."/>
            <person name="Flavell R.B."/>
            <person name="Feldmann K.A."/>
        </authorList>
    </citation>
    <scope>NUCLEOTIDE SEQUENCE [LARGE SCALE MRNA] (ISOFORM 2)</scope>
</reference>
<reference key="5">
    <citation type="journal article" date="2003" name="Plant Sci.">
        <title>The BAG-family proteins in Arabidopsis thaliana.</title>
        <authorList>
            <person name="Juqiang Y."/>
            <person name="Cixin H."/>
            <person name="Hong Z."/>
        </authorList>
    </citation>
    <scope>GENE FAMILY</scope>
    <scope>NOMENCLATURE</scope>
</reference>
<reference key="6">
    <citation type="journal article" date="2006" name="J. Biol. Chem.">
        <title>Identification and functional characterization of the BAG protein family in Arabidopsis thaliana.</title>
        <authorList>
            <person name="Doukhanina E.V."/>
            <person name="Chen S."/>
            <person name="van der Zalm E."/>
            <person name="Godzik A."/>
            <person name="Reed J."/>
            <person name="Dickman M.B."/>
        </authorList>
    </citation>
    <scope>GENE FAMILY</scope>
</reference>
<sequence>MMKMSIGTTTSGDGEMELRPGGMVVQKRTDHSSSVPRGIRVRVKYGSVHHEISINSQSTFGELKKILSGATGVHHQDMQIIYKDKERDSKMFLDLSGVKDRSKLILIEDPISQEKRLLELRKIATKEKSSKAISDISFQVERLAGQLSAFDTVIGKGGKVEEKNLENLMEMLMNQLVKLDAISGDGDVKLKKKMQEERLHKYVEALDLLKIKNSRQPQTKPKPQYKEREMLTFYEEASRKPTASSSSPPVIITTRWETFDSSSASTATLQPVRPVHPKFKWELFN</sequence>
<evidence type="ECO:0000250" key="1"/>
<evidence type="ECO:0000250" key="2">
    <source>
        <dbReference type="UniProtKB" id="Q0WUQ1"/>
    </source>
</evidence>
<evidence type="ECO:0000255" key="3">
    <source>
        <dbReference type="PROSITE-ProRule" id="PRU00214"/>
    </source>
</evidence>
<evidence type="ECO:0000255" key="4">
    <source>
        <dbReference type="PROSITE-ProRule" id="PRU00369"/>
    </source>
</evidence>
<evidence type="ECO:0000303" key="5">
    <source ref="4"/>
</evidence>
<evidence type="ECO:0000305" key="6"/>
<evidence type="ECO:0007829" key="7">
    <source>
        <dbReference type="PDB" id="4HWD"/>
    </source>
</evidence>
<feature type="chain" id="PRO_0000415522" description="BAG family molecular chaperone regulator 2">
    <location>
        <begin position="1"/>
        <end position="285"/>
    </location>
</feature>
<feature type="domain" description="Ubiquitin-like" evidence="3">
    <location>
        <begin position="37"/>
        <end position="113"/>
    </location>
</feature>
<feature type="domain" description="BAG" evidence="4">
    <location>
        <begin position="132"/>
        <end position="210"/>
    </location>
</feature>
<feature type="modified residue" description="Phosphoserine" evidence="2">
    <location>
        <position position="244"/>
    </location>
</feature>
<feature type="splice variant" id="VSP_042273" description="In isoform 2." evidence="5">
    <original>Q</original>
    <variation>QNLMIRFTNCWK</variation>
    <location>
        <position position="195"/>
    </location>
</feature>
<feature type="helix" evidence="7">
    <location>
        <begin position="129"/>
        <end position="155"/>
    </location>
</feature>
<feature type="helix" evidence="7">
    <location>
        <begin position="162"/>
        <end position="181"/>
    </location>
</feature>
<feature type="helix" evidence="7">
    <location>
        <begin position="187"/>
        <end position="213"/>
    </location>
</feature>
<protein>
    <recommendedName>
        <fullName>BAG family molecular chaperone regulator 2</fullName>
    </recommendedName>
    <alternativeName>
        <fullName>Bcl-2-associated athanogene 2</fullName>
    </alternativeName>
</protein>
<accession>Q0WPX7</accession>
<accession>F4K550</accession>
<accession>Q8LEP8</accession>
<accession>Q9FIS8</accession>
<gene>
    <name type="primary">BAG2</name>
    <name type="ordered locus">At5g62100</name>
    <name type="ORF">MTG10.13</name>
</gene>
<dbReference type="EMBL" id="AB016880">
    <property type="protein sequence ID" value="BAB10172.1"/>
    <property type="status" value="ALT_SEQ"/>
    <property type="molecule type" value="Genomic_DNA"/>
</dbReference>
<dbReference type="EMBL" id="CP002688">
    <property type="protein sequence ID" value="AED97562.1"/>
    <property type="molecule type" value="Genomic_DNA"/>
</dbReference>
<dbReference type="EMBL" id="CP002688">
    <property type="protein sequence ID" value="AED97563.1"/>
    <property type="molecule type" value="Genomic_DNA"/>
</dbReference>
<dbReference type="EMBL" id="AK228933">
    <property type="protein sequence ID" value="BAF00822.1"/>
    <property type="molecule type" value="mRNA"/>
</dbReference>
<dbReference type="EMBL" id="AY085305">
    <property type="protein sequence ID" value="AAM62536.1"/>
    <property type="status" value="ALT_INIT"/>
    <property type="molecule type" value="mRNA"/>
</dbReference>
<dbReference type="RefSeq" id="NP_568950.2">
    <molecule id="Q0WPX7-1"/>
    <property type="nucleotide sequence ID" value="NM_125603.3"/>
</dbReference>
<dbReference type="RefSeq" id="NP_851246.1">
    <molecule id="Q0WPX7-2"/>
    <property type="nucleotide sequence ID" value="NM_180915.1"/>
</dbReference>
<dbReference type="PDB" id="4HWD">
    <property type="method" value="X-ray"/>
    <property type="resolution" value="2.31 A"/>
    <property type="chains" value="A/B/D=129-214"/>
</dbReference>
<dbReference type="PDBsum" id="4HWD"/>
<dbReference type="SMR" id="Q0WPX7"/>
<dbReference type="FunCoup" id="Q0WPX7">
    <property type="interactions" value="3"/>
</dbReference>
<dbReference type="STRING" id="3702.Q0WPX7"/>
<dbReference type="iPTMnet" id="Q0WPX7"/>
<dbReference type="ProteomicsDB" id="240810">
    <molecule id="Q0WPX7-1"/>
</dbReference>
<dbReference type="EnsemblPlants" id="AT5G62100.1">
    <molecule id="Q0WPX7-2"/>
    <property type="protein sequence ID" value="AT5G62100.1"/>
    <property type="gene ID" value="AT5G62100"/>
</dbReference>
<dbReference type="EnsemblPlants" id="AT5G62100.2">
    <molecule id="Q0WPX7-1"/>
    <property type="protein sequence ID" value="AT5G62100.2"/>
    <property type="gene ID" value="AT5G62100"/>
</dbReference>
<dbReference type="GeneID" id="836330"/>
<dbReference type="Gramene" id="AT5G62100.1">
    <molecule id="Q0WPX7-2"/>
    <property type="protein sequence ID" value="AT5G62100.1"/>
    <property type="gene ID" value="AT5G62100"/>
</dbReference>
<dbReference type="Gramene" id="AT5G62100.2">
    <molecule id="Q0WPX7-1"/>
    <property type="protein sequence ID" value="AT5G62100.2"/>
    <property type="gene ID" value="AT5G62100"/>
</dbReference>
<dbReference type="KEGG" id="ath:AT5G62100"/>
<dbReference type="Araport" id="AT5G62100"/>
<dbReference type="TAIR" id="AT5G62100">
    <property type="gene designation" value="BAG2"/>
</dbReference>
<dbReference type="eggNOG" id="KOG4361">
    <property type="taxonomic scope" value="Eukaryota"/>
</dbReference>
<dbReference type="InParanoid" id="Q0WPX7"/>
<dbReference type="OMA" id="PQHKERD"/>
<dbReference type="OrthoDB" id="776628at2759"/>
<dbReference type="PhylomeDB" id="Q0WPX7"/>
<dbReference type="EvolutionaryTrace" id="Q0WPX7"/>
<dbReference type="PRO" id="PR:Q0WPX7"/>
<dbReference type="Proteomes" id="UP000006548">
    <property type="component" value="Chromosome 5"/>
</dbReference>
<dbReference type="ExpressionAtlas" id="Q0WPX7">
    <property type="expression patterns" value="baseline and differential"/>
</dbReference>
<dbReference type="GO" id="GO:0005737">
    <property type="term" value="C:cytoplasm"/>
    <property type="evidence" value="ECO:0007669"/>
    <property type="project" value="UniProtKB-ARBA"/>
</dbReference>
<dbReference type="GO" id="GO:0051087">
    <property type="term" value="F:protein-folding chaperone binding"/>
    <property type="evidence" value="ECO:0007669"/>
    <property type="project" value="InterPro"/>
</dbReference>
<dbReference type="FunFam" id="3.10.20.90:FF:000298">
    <property type="entry name" value="BAG family molecular chaperone regulator 1"/>
    <property type="match status" value="1"/>
</dbReference>
<dbReference type="Gene3D" id="1.20.58.120">
    <property type="entry name" value="BAG domain"/>
    <property type="match status" value="1"/>
</dbReference>
<dbReference type="Gene3D" id="3.10.20.90">
    <property type="entry name" value="Phosphatidylinositol 3-kinase Catalytic Subunit, Chain A, domain 1"/>
    <property type="match status" value="1"/>
</dbReference>
<dbReference type="InterPro" id="IPR039773">
    <property type="entry name" value="BAG_chaperone_regulator"/>
</dbReference>
<dbReference type="InterPro" id="IPR036533">
    <property type="entry name" value="BAG_dom_sf"/>
</dbReference>
<dbReference type="InterPro" id="IPR003103">
    <property type="entry name" value="BAG_domain"/>
</dbReference>
<dbReference type="InterPro" id="IPR000626">
    <property type="entry name" value="Ubiquitin-like_dom"/>
</dbReference>
<dbReference type="InterPro" id="IPR029071">
    <property type="entry name" value="Ubiquitin-like_domsf"/>
</dbReference>
<dbReference type="PANTHER" id="PTHR12329:SF33">
    <property type="entry name" value="BAG FAMILY MOLECULAR CHAPERONE REGULATOR 2"/>
    <property type="match status" value="1"/>
</dbReference>
<dbReference type="PANTHER" id="PTHR12329">
    <property type="entry name" value="BCL2-ASSOCIATED ATHANOGENE"/>
    <property type="match status" value="1"/>
</dbReference>
<dbReference type="Pfam" id="PF02179">
    <property type="entry name" value="BAG"/>
    <property type="match status" value="1"/>
</dbReference>
<dbReference type="SMART" id="SM00264">
    <property type="entry name" value="BAG"/>
    <property type="match status" value="1"/>
</dbReference>
<dbReference type="SUPFAM" id="SSF63491">
    <property type="entry name" value="BAG domain"/>
    <property type="match status" value="1"/>
</dbReference>
<dbReference type="SUPFAM" id="SSF54236">
    <property type="entry name" value="Ubiquitin-like"/>
    <property type="match status" value="1"/>
</dbReference>
<dbReference type="PROSITE" id="PS51035">
    <property type="entry name" value="BAG"/>
    <property type="match status" value="1"/>
</dbReference>
<dbReference type="PROSITE" id="PS50053">
    <property type="entry name" value="UBIQUITIN_2"/>
    <property type="match status" value="1"/>
</dbReference>
<proteinExistence type="evidence at protein level"/>
<name>BAG2_ARATH</name>